<comment type="function">
    <text evidence="1">Required for rescue of stalled ribosomes mediated by trans-translation. Binds to transfer-messenger RNA (tmRNA), required for stable association of tmRNA with ribosomes. tmRNA and SmpB together mimic tRNA shape, replacing the anticodon stem-loop with SmpB. tmRNA is encoded by the ssrA gene; the 2 termini fold to resemble tRNA(Ala) and it encodes a 'tag peptide', a short internal open reading frame. During trans-translation Ala-aminoacylated tmRNA acts like a tRNA, entering the A-site of stalled ribosomes, displacing the stalled mRNA. The ribosome then switches to translate the ORF on the tmRNA; the nascent peptide is terminated with the 'tag peptide' encoded by the tmRNA and targeted for degradation. The ribosome is freed to recommence translation, which seems to be the essential function of trans-translation.</text>
</comment>
<comment type="subcellular location">
    <subcellularLocation>
        <location evidence="1">Cytoplasm</location>
    </subcellularLocation>
    <text evidence="1">The tmRNA-SmpB complex associates with stalled 70S ribosomes.</text>
</comment>
<comment type="similarity">
    <text evidence="1">Belongs to the SmpB family.</text>
</comment>
<keyword id="KW-0963">Cytoplasm</keyword>
<keyword id="KW-1185">Reference proteome</keyword>
<keyword id="KW-0694">RNA-binding</keyword>
<gene>
    <name evidence="1" type="primary">smpB</name>
    <name type="ordered locus">FTL_0761</name>
</gene>
<name>SSRP_FRATH</name>
<feature type="chain" id="PRO_1000002059" description="SsrA-binding protein">
    <location>
        <begin position="1"/>
        <end position="157"/>
    </location>
</feature>
<feature type="region of interest" description="Disordered" evidence="2">
    <location>
        <begin position="132"/>
        <end position="157"/>
    </location>
</feature>
<feature type="compositionally biased region" description="Basic and acidic residues" evidence="2">
    <location>
        <begin position="135"/>
        <end position="157"/>
    </location>
</feature>
<evidence type="ECO:0000255" key="1">
    <source>
        <dbReference type="HAMAP-Rule" id="MF_00023"/>
    </source>
</evidence>
<evidence type="ECO:0000256" key="2">
    <source>
        <dbReference type="SAM" id="MobiDB-lite"/>
    </source>
</evidence>
<proteinExistence type="inferred from homology"/>
<sequence length="157" mass="17954">MSKHKVSPATIAKNKKALHDYTILEKFEAGIVLQGWEVKSIRAGKVQMVDSHVHIKHGEAWLFNCLITPLLSASTHVVADAAATRKLLLNRREINKIMGRIEQKGFTCIPLSMYWKGPRVKVEIALAQGKKVHDKRQAQKDKDWAREKDRLFKKAYK</sequence>
<organism>
    <name type="scientific">Francisella tularensis subsp. holarctica (strain LVS)</name>
    <dbReference type="NCBI Taxonomy" id="376619"/>
    <lineage>
        <taxon>Bacteria</taxon>
        <taxon>Pseudomonadati</taxon>
        <taxon>Pseudomonadota</taxon>
        <taxon>Gammaproteobacteria</taxon>
        <taxon>Thiotrichales</taxon>
        <taxon>Francisellaceae</taxon>
        <taxon>Francisella</taxon>
    </lineage>
</organism>
<protein>
    <recommendedName>
        <fullName evidence="1">SsrA-binding protein</fullName>
    </recommendedName>
    <alternativeName>
        <fullName evidence="1">Small protein B</fullName>
    </alternativeName>
</protein>
<dbReference type="EMBL" id="AM233362">
    <property type="protein sequence ID" value="CAJ79200.1"/>
    <property type="molecule type" value="Genomic_DNA"/>
</dbReference>
<dbReference type="RefSeq" id="WP_003015283.1">
    <property type="nucleotide sequence ID" value="NZ_CP009694.1"/>
</dbReference>
<dbReference type="SMR" id="Q2A446"/>
<dbReference type="KEGG" id="ftl:FTL_0761"/>
<dbReference type="Proteomes" id="UP000001944">
    <property type="component" value="Chromosome"/>
</dbReference>
<dbReference type="GO" id="GO:0005829">
    <property type="term" value="C:cytosol"/>
    <property type="evidence" value="ECO:0007669"/>
    <property type="project" value="TreeGrafter"/>
</dbReference>
<dbReference type="GO" id="GO:0003723">
    <property type="term" value="F:RNA binding"/>
    <property type="evidence" value="ECO:0007669"/>
    <property type="project" value="UniProtKB-UniRule"/>
</dbReference>
<dbReference type="GO" id="GO:0070929">
    <property type="term" value="P:trans-translation"/>
    <property type="evidence" value="ECO:0007669"/>
    <property type="project" value="UniProtKB-UniRule"/>
</dbReference>
<dbReference type="CDD" id="cd09294">
    <property type="entry name" value="SmpB"/>
    <property type="match status" value="1"/>
</dbReference>
<dbReference type="Gene3D" id="2.40.280.10">
    <property type="match status" value="1"/>
</dbReference>
<dbReference type="HAMAP" id="MF_00023">
    <property type="entry name" value="SmpB"/>
    <property type="match status" value="1"/>
</dbReference>
<dbReference type="InterPro" id="IPR023620">
    <property type="entry name" value="SmpB"/>
</dbReference>
<dbReference type="InterPro" id="IPR000037">
    <property type="entry name" value="SsrA-bd_prot"/>
</dbReference>
<dbReference type="InterPro" id="IPR020081">
    <property type="entry name" value="SsrA-bd_prot_CS"/>
</dbReference>
<dbReference type="NCBIfam" id="NF003843">
    <property type="entry name" value="PRK05422.1"/>
    <property type="match status" value="1"/>
</dbReference>
<dbReference type="NCBIfam" id="TIGR00086">
    <property type="entry name" value="smpB"/>
    <property type="match status" value="1"/>
</dbReference>
<dbReference type="PANTHER" id="PTHR30308:SF2">
    <property type="entry name" value="SSRA-BINDING PROTEIN"/>
    <property type="match status" value="1"/>
</dbReference>
<dbReference type="PANTHER" id="PTHR30308">
    <property type="entry name" value="TMRNA-BINDING COMPONENT OF TRANS-TRANSLATION TAGGING COMPLEX"/>
    <property type="match status" value="1"/>
</dbReference>
<dbReference type="Pfam" id="PF01668">
    <property type="entry name" value="SmpB"/>
    <property type="match status" value="1"/>
</dbReference>
<dbReference type="SUPFAM" id="SSF74982">
    <property type="entry name" value="Small protein B (SmpB)"/>
    <property type="match status" value="1"/>
</dbReference>
<dbReference type="PROSITE" id="PS01317">
    <property type="entry name" value="SSRP"/>
    <property type="match status" value="1"/>
</dbReference>
<accession>Q2A446</accession>
<reference key="1">
    <citation type="submission" date="2006-03" db="EMBL/GenBank/DDBJ databases">
        <title>Complete genome sequence of Francisella tularensis LVS (Live Vaccine Strain).</title>
        <authorList>
            <person name="Chain P."/>
            <person name="Larimer F."/>
            <person name="Land M."/>
            <person name="Stilwagen S."/>
            <person name="Larsson P."/>
            <person name="Bearden S."/>
            <person name="Chu M."/>
            <person name="Oyston P."/>
            <person name="Forsman M."/>
            <person name="Andersson S."/>
            <person name="Lindler L."/>
            <person name="Titball R."/>
            <person name="Garcia E."/>
        </authorList>
    </citation>
    <scope>NUCLEOTIDE SEQUENCE [LARGE SCALE GENOMIC DNA]</scope>
    <source>
        <strain>LVS</strain>
    </source>
</reference>